<accession>P0A1E9</accession>
<accession>P55226</accession>
<gene>
    <name type="primary">csgB</name>
    <name type="synonym">agfB</name>
</gene>
<sequence>MKNKLLFMMLTILGAPGIATATNYDLARSEYNFAVNELSKSSFNQAAIIGQVGTDNSARVRQEGSKLLSVISQEGGNNRAKVDQAGNYNFAYIEQTGNANDASISQSAYGNSAAIIQKGSGNKANITQYGTQKTAVVVQKQSHMAIRVTQR</sequence>
<reference key="1">
    <citation type="journal article" date="1996" name="J. Bacteriol.">
        <title>Salmonella enteritidis agfBAC operon encoding thin, aggregative fimbriae.</title>
        <authorList>
            <person name="Collinson S.K."/>
            <person name="Clouthier S.C."/>
            <person name="Doran J.L."/>
            <person name="Banser P.A."/>
            <person name="Kay W.W."/>
        </authorList>
    </citation>
    <scope>NUCLEOTIDE SEQUENCE [GENOMIC DNA]</scope>
    <source>
        <strain>27655-3B</strain>
    </source>
</reference>
<reference key="2">
    <citation type="journal article" date="2007" name="Microbiology">
        <title>AgfC and AgfE facilitate extracellular thin aggregative fimbriae synthesis in Salmonella enteritidis.</title>
        <authorList>
            <person name="Gibson D.L."/>
            <person name="White A.P."/>
            <person name="Rajotte C.M."/>
            <person name="Kay W.W."/>
        </authorList>
    </citation>
    <scope>SUBCELLULAR LOCATION</scope>
    <scope>INDUCTION</scope>
    <scope>OPERON STRUCTURE</scope>
    <source>
        <strain>27655-3B</strain>
    </source>
</reference>
<protein>
    <recommendedName>
        <fullName>Minor curlin subunit</fullName>
    </recommendedName>
    <alternativeName>
        <fullName>Fimbrin SEF17 minor subunit</fullName>
    </alternativeName>
</protein>
<proteinExistence type="evidence at protein level"/>
<organism>
    <name type="scientific">Salmonella enteritidis</name>
    <dbReference type="NCBI Taxonomy" id="149539"/>
    <lineage>
        <taxon>Bacteria</taxon>
        <taxon>Pseudomonadati</taxon>
        <taxon>Pseudomonadota</taxon>
        <taxon>Gammaproteobacteria</taxon>
        <taxon>Enterobacterales</taxon>
        <taxon>Enterobacteriaceae</taxon>
        <taxon>Salmonella</taxon>
    </lineage>
</organism>
<feature type="signal peptide" evidence="1">
    <location>
        <begin position="1"/>
        <end position="21"/>
    </location>
</feature>
<feature type="chain" id="PRO_0000006375" description="Minor curlin subunit">
    <location>
        <begin position="22"/>
        <end position="151"/>
    </location>
</feature>
<name>CSGB_SALEN</name>
<evidence type="ECO:0000255" key="1"/>
<evidence type="ECO:0000269" key="2">
    <source>
    </source>
</evidence>
<evidence type="ECO:0000305" key="3"/>
<dbReference type="EMBL" id="U43280">
    <property type="protein sequence ID" value="AAC43598.1"/>
    <property type="molecule type" value="Genomic_DNA"/>
</dbReference>
<dbReference type="PIR" id="JC6040">
    <property type="entry name" value="JC6040"/>
</dbReference>
<dbReference type="RefSeq" id="WP_000791655.1">
    <property type="nucleotide sequence ID" value="NZ_WIDA01000002.1"/>
</dbReference>
<dbReference type="SMR" id="P0A1E9"/>
<dbReference type="PATRIC" id="fig|149539.316.peg.2053"/>
<dbReference type="OMA" id="NFGNTAY"/>
<dbReference type="GO" id="GO:0009289">
    <property type="term" value="C:pilus"/>
    <property type="evidence" value="ECO:0000314"/>
    <property type="project" value="UniProtKB"/>
</dbReference>
<dbReference type="GO" id="GO:0007155">
    <property type="term" value="P:cell adhesion"/>
    <property type="evidence" value="ECO:0007669"/>
    <property type="project" value="InterPro"/>
</dbReference>
<dbReference type="InterPro" id="IPR009742">
    <property type="entry name" value="Curlin_rpt"/>
</dbReference>
<dbReference type="NCBIfam" id="NF007506">
    <property type="entry name" value="PRK10101.1"/>
    <property type="match status" value="1"/>
</dbReference>
<dbReference type="Pfam" id="PF07012">
    <property type="entry name" value="Curlin_rpt"/>
    <property type="match status" value="3"/>
</dbReference>
<comment type="function">
    <text>Curlin is the structural subunit of the curli. Curli are coiled surface structures that assemble preferentially at growth temperatures below 37 degrees Celsius. Curli can bind to fibronectin. The minor subunit is the nucleation component of curlin monomers.</text>
</comment>
<comment type="subcellular location">
    <subcellularLocation>
        <location evidence="2">Fimbrium</location>
    </subcellularLocation>
    <text>Part of the curli surface structure.</text>
</comment>
<comment type="induction">
    <text evidence="2">Constitutively expressed in agar-grown cells (at protein level), part of the csgBAC (agfBAC) operon.</text>
</comment>
<comment type="similarity">
    <text evidence="3">Belongs to the CsgA/CsgB family.</text>
</comment>
<keyword id="KW-0281">Fimbrium</keyword>
<keyword id="KW-0732">Signal</keyword>